<evidence type="ECO:0000250" key="1"/>
<evidence type="ECO:0000305" key="2"/>
<name>GRII_STRGG</name>
<protein>
    <recommendedName>
        <fullName>2-amino-4,5-dihydroxy-6-oxo-7-(phosphonooxy)heptanoate synthase</fullName>
        <ecNumber>4.1.2.56</ecNumber>
    </recommendedName>
</protein>
<sequence>MAPNAPFARSLRLQRLHHHDPDRLFIVPLDHSITDGPLSRAHRLDPLVGELASHHVDGIVLHKGSLRHVDPEWFTRTSLIVHLSASTVHAPDPNAKYLVSSVEESLRMGADAVSVHVNLGSEGERHQIADMAAVAEACDRWNVPLLAMMYPRGPKIDDPRDPALVAHAVQVAVDLGADLVKTLYVGSVAAMAEITAASPVPVVVVGGPRDSDESRILAYVDDALRGGAAGVAMGRNVFQAPDPGAMADKLSDLIHNSGTRGAARAPAGAAAGAA</sequence>
<reference key="1">
    <citation type="journal article" date="2008" name="J. Bacteriol.">
        <title>Genome sequence of the streptomycin-producing microorganism Streptomyces griseus IFO 13350.</title>
        <authorList>
            <person name="Ohnishi Y."/>
            <person name="Ishikawa J."/>
            <person name="Hara H."/>
            <person name="Suzuki H."/>
            <person name="Ikenoya M."/>
            <person name="Ikeda H."/>
            <person name="Yamashita A."/>
            <person name="Hattori M."/>
            <person name="Horinouchi S."/>
        </authorList>
    </citation>
    <scope>NUCLEOTIDE SEQUENCE [LARGE SCALE GENOMIC DNA]</scope>
    <source>
        <strain>JCM 4626 / CBS 651.72 / NBRC 13350 / KCC S-0626 / ISP 5235</strain>
    </source>
</reference>
<organism>
    <name type="scientific">Streptomyces griseus subsp. griseus (strain JCM 4626 / CBS 651.72 / NBRC 13350 / KCC S-0626 / ISP 5235)</name>
    <dbReference type="NCBI Taxonomy" id="455632"/>
    <lineage>
        <taxon>Bacteria</taxon>
        <taxon>Bacillati</taxon>
        <taxon>Actinomycetota</taxon>
        <taxon>Actinomycetes</taxon>
        <taxon>Kitasatosporales</taxon>
        <taxon>Streptomycetaceae</taxon>
        <taxon>Streptomyces</taxon>
    </lineage>
</organism>
<keyword id="KW-0028">Amino-acid biosynthesis</keyword>
<keyword id="KW-0057">Aromatic amino acid biosynthesis</keyword>
<keyword id="KW-0456">Lyase</keyword>
<gene>
    <name type="primary">griI</name>
    <name type="ordered locus">SGR_4249</name>
</gene>
<proteinExistence type="inferred from homology"/>
<accession>B1VTI8</accession>
<feature type="chain" id="PRO_0000361268" description="2-amino-4,5-dihydroxy-6-oxo-7-(phosphonooxy)heptanoate synthase">
    <location>
        <begin position="1"/>
        <end position="274"/>
    </location>
</feature>
<comment type="function">
    <text evidence="1">catalyzes aldol condensation between L-aspartate-4-semialdehyde (ASA) and dihydroxyacetone phosphate (DHAP), to form 2-amino-4,5-dihydroxy-6-oxo-7-(phosphonooxy)heptanoate.</text>
</comment>
<comment type="catalytic activity">
    <reaction>
        <text>2-amino-4,5-dihydroxy-6-oxo-7-(phosphooxy)heptanoate = L-aspartate 4-semialdehyde + dihydroxyacetone phosphate</text>
        <dbReference type="Rhea" id="RHEA:26313"/>
        <dbReference type="ChEBI" id="CHEBI:57642"/>
        <dbReference type="ChEBI" id="CHEBI:58898"/>
        <dbReference type="ChEBI" id="CHEBI:537519"/>
        <dbReference type="EC" id="4.1.2.56"/>
    </reaction>
</comment>
<comment type="subunit">
    <text evidence="1">Homodecamer.</text>
</comment>
<comment type="similarity">
    <text evidence="2">Belongs to the DeoC/FbaB aldolase family. GriI subfamily.</text>
</comment>
<dbReference type="EC" id="4.1.2.56"/>
<dbReference type="EMBL" id="AP009493">
    <property type="protein sequence ID" value="BAG21078.1"/>
    <property type="molecule type" value="Genomic_DNA"/>
</dbReference>
<dbReference type="RefSeq" id="WP_012380462.1">
    <property type="nucleotide sequence ID" value="NC_010572.1"/>
</dbReference>
<dbReference type="SMR" id="B1VTI8"/>
<dbReference type="KEGG" id="sgr:SGR_4249"/>
<dbReference type="eggNOG" id="COG1830">
    <property type="taxonomic scope" value="Bacteria"/>
</dbReference>
<dbReference type="HOGENOM" id="CLU_057069_2_0_11"/>
<dbReference type="Proteomes" id="UP000001685">
    <property type="component" value="Chromosome"/>
</dbReference>
<dbReference type="GO" id="GO:0004332">
    <property type="term" value="F:fructose-bisphosphate aldolase activity"/>
    <property type="evidence" value="ECO:0007669"/>
    <property type="project" value="InterPro"/>
</dbReference>
<dbReference type="GO" id="GO:0008652">
    <property type="term" value="P:amino acid biosynthetic process"/>
    <property type="evidence" value="ECO:0007669"/>
    <property type="project" value="UniProtKB-KW"/>
</dbReference>
<dbReference type="GO" id="GO:0009073">
    <property type="term" value="P:aromatic amino acid family biosynthetic process"/>
    <property type="evidence" value="ECO:0007669"/>
    <property type="project" value="UniProtKB-KW"/>
</dbReference>
<dbReference type="CDD" id="cd00958">
    <property type="entry name" value="DhnA"/>
    <property type="match status" value="1"/>
</dbReference>
<dbReference type="Gene3D" id="3.20.20.70">
    <property type="entry name" value="Aldolase class I"/>
    <property type="match status" value="1"/>
</dbReference>
<dbReference type="InterPro" id="IPR013785">
    <property type="entry name" value="Aldolase_TIM"/>
</dbReference>
<dbReference type="InterPro" id="IPR002915">
    <property type="entry name" value="DeoC/FbaB/LacD_aldolase"/>
</dbReference>
<dbReference type="InterPro" id="IPR050456">
    <property type="entry name" value="DeoC/FbaB_aldolase"/>
</dbReference>
<dbReference type="InterPro" id="IPR041720">
    <property type="entry name" value="FbaB-like"/>
</dbReference>
<dbReference type="NCBIfam" id="NF005556">
    <property type="entry name" value="PRK07226.1"/>
    <property type="match status" value="1"/>
</dbReference>
<dbReference type="PANTHER" id="PTHR47916:SF1">
    <property type="entry name" value="3-HYDROXY-5-PHOSPHONOOXYPENTANE-2,4-DIONE THIOLASE"/>
    <property type="match status" value="1"/>
</dbReference>
<dbReference type="PANTHER" id="PTHR47916">
    <property type="entry name" value="FRUCTOSE-BISPHOSPHATE ALDOLASE CLASS 1"/>
    <property type="match status" value="1"/>
</dbReference>
<dbReference type="Pfam" id="PF01791">
    <property type="entry name" value="DeoC"/>
    <property type="match status" value="1"/>
</dbReference>
<dbReference type="PIRSF" id="PIRSF038992">
    <property type="entry name" value="Aldolase_Ia"/>
    <property type="match status" value="1"/>
</dbReference>
<dbReference type="SMART" id="SM01133">
    <property type="entry name" value="DeoC"/>
    <property type="match status" value="1"/>
</dbReference>
<dbReference type="SUPFAM" id="SSF51569">
    <property type="entry name" value="Aldolase"/>
    <property type="match status" value="1"/>
</dbReference>